<sequence>MENFPIINLENLNGDERAKTMEMIKDACENWGFFELVNHGIPHEVMDTVEKLTKGHYKKCMEQRFKELVASKGLEAVQAEVTDLDWESTFFLRHLPTSNISQVPDLDEEYREVMRDFAKRLEKLAEELLDLLCENLGLEKGYLKNAFYGSKGPNFGTKVSNYPPCPKPDLIKGLRAHTDAGGIILLFQDDKVSGLQLLKDEQWIDVPPMRHSIVVNLGDQLEVITNGKYKSVMHRVIAQTDGTRMSLASFYNPGNDAVIYPAPSLIEESKQVYPKFVFDDYMKLYAGLKFQPKEPRFEAMKAMEANVELVDQIASA</sequence>
<comment type="catalytic activity">
    <reaction>
        <text>1-aminocyclopropane-1-carboxylate + L-ascorbate + O2 = ethene + L-dehydroascorbate + hydrogen cyanide + CO2 + 2 H2O</text>
        <dbReference type="Rhea" id="RHEA:23640"/>
        <dbReference type="ChEBI" id="CHEBI:15377"/>
        <dbReference type="ChEBI" id="CHEBI:15379"/>
        <dbReference type="ChEBI" id="CHEBI:16526"/>
        <dbReference type="ChEBI" id="CHEBI:18153"/>
        <dbReference type="ChEBI" id="CHEBI:18407"/>
        <dbReference type="ChEBI" id="CHEBI:38290"/>
        <dbReference type="ChEBI" id="CHEBI:58360"/>
        <dbReference type="ChEBI" id="CHEBI:58539"/>
        <dbReference type="EC" id="1.14.17.4"/>
    </reaction>
</comment>
<comment type="cofactor">
    <cofactor>
        <name>Fe cation</name>
        <dbReference type="ChEBI" id="CHEBI:24875"/>
    </cofactor>
</comment>
<comment type="pathway">
    <text>Alkene biosynthesis; ethylene biosynthesis via S-adenosyl-L-methionine; ethylene from S-adenosyl-L-methionine: step 2/2.</text>
</comment>
<comment type="tissue specificity">
    <text>Expressed in all of the floral organs examined apart from the sepals.</text>
</comment>
<comment type="similarity">
    <text evidence="2">Belongs to the iron/ascorbate-dependent oxidoreductase family.</text>
</comment>
<dbReference type="EC" id="1.14.17.4"/>
<dbReference type="EMBL" id="X58885">
    <property type="protein sequence ID" value="CAA41689.1"/>
    <property type="molecule type" value="mRNA"/>
</dbReference>
<dbReference type="EMBL" id="Z54199">
    <property type="protein sequence ID" value="CAA90904.1"/>
    <property type="molecule type" value="Genomic_DNA"/>
</dbReference>
<dbReference type="PIR" id="S16327">
    <property type="entry name" value="S16327"/>
</dbReference>
<dbReference type="RefSeq" id="NP_001233928.1">
    <property type="nucleotide sequence ID" value="NM_001246999.1"/>
</dbReference>
<dbReference type="SMR" id="P24157"/>
<dbReference type="STRING" id="4081.P24157"/>
<dbReference type="PaxDb" id="4081-Solyc07g049550.2.1"/>
<dbReference type="EnsemblPlants" id="Solyc07g049550.3.1">
    <property type="protein sequence ID" value="Solyc07g049550.3.1"/>
    <property type="gene ID" value="Solyc07g049550.3"/>
</dbReference>
<dbReference type="GeneID" id="544285"/>
<dbReference type="Gramene" id="Solyc07g049550.3.1">
    <property type="protein sequence ID" value="Solyc07g049550.3.1"/>
    <property type="gene ID" value="Solyc07g049550.3"/>
</dbReference>
<dbReference type="KEGG" id="sly:544285"/>
<dbReference type="eggNOG" id="KOG0143">
    <property type="taxonomic scope" value="Eukaryota"/>
</dbReference>
<dbReference type="HOGENOM" id="CLU_010119_16_1_1"/>
<dbReference type="InParanoid" id="P24157"/>
<dbReference type="OMA" id="ISIELMM"/>
<dbReference type="OrthoDB" id="288590at2759"/>
<dbReference type="PhylomeDB" id="P24157"/>
<dbReference type="BioCyc" id="MetaCyc:MONOMER-15536"/>
<dbReference type="BRENDA" id="1.14.17.4">
    <property type="organism ID" value="3101"/>
</dbReference>
<dbReference type="UniPathway" id="UPA00384">
    <property type="reaction ID" value="UER00563"/>
</dbReference>
<dbReference type="Proteomes" id="UP000004994">
    <property type="component" value="Chromosome 7"/>
</dbReference>
<dbReference type="GO" id="GO:0009815">
    <property type="term" value="F:1-aminocyclopropane-1-carboxylate oxidase activity"/>
    <property type="evidence" value="ECO:0007669"/>
    <property type="project" value="UniProtKB-EC"/>
</dbReference>
<dbReference type="GO" id="GO:0016706">
    <property type="term" value="F:2-oxoglutarate-dependent dioxygenase activity"/>
    <property type="evidence" value="ECO:0000318"/>
    <property type="project" value="GO_Central"/>
</dbReference>
<dbReference type="GO" id="GO:0031418">
    <property type="term" value="F:L-ascorbic acid binding"/>
    <property type="evidence" value="ECO:0007669"/>
    <property type="project" value="UniProtKB-KW"/>
</dbReference>
<dbReference type="GO" id="GO:0046872">
    <property type="term" value="F:metal ion binding"/>
    <property type="evidence" value="ECO:0007669"/>
    <property type="project" value="UniProtKB-KW"/>
</dbReference>
<dbReference type="GO" id="GO:0009805">
    <property type="term" value="P:coumarin biosynthetic process"/>
    <property type="evidence" value="ECO:0007669"/>
    <property type="project" value="UniProtKB-ARBA"/>
</dbReference>
<dbReference type="GO" id="GO:0009693">
    <property type="term" value="P:ethylene biosynthetic process"/>
    <property type="evidence" value="ECO:0007669"/>
    <property type="project" value="UniProtKB-UniPathway"/>
</dbReference>
<dbReference type="GO" id="GO:0009835">
    <property type="term" value="P:fruit ripening"/>
    <property type="evidence" value="ECO:0007669"/>
    <property type="project" value="UniProtKB-KW"/>
</dbReference>
<dbReference type="GO" id="GO:0002238">
    <property type="term" value="P:response to molecule of fungal origin"/>
    <property type="evidence" value="ECO:0007669"/>
    <property type="project" value="UniProtKB-ARBA"/>
</dbReference>
<dbReference type="FunFam" id="2.60.120.330:FF:000002">
    <property type="entry name" value="1-aminocyclopropane-1-carboxylate oxidase 1"/>
    <property type="match status" value="1"/>
</dbReference>
<dbReference type="Gene3D" id="2.60.120.330">
    <property type="entry name" value="B-lactam Antibiotic, Isopenicillin N Synthase, Chain"/>
    <property type="match status" value="1"/>
</dbReference>
<dbReference type="InterPro" id="IPR026992">
    <property type="entry name" value="DIOX_N"/>
</dbReference>
<dbReference type="InterPro" id="IPR044861">
    <property type="entry name" value="IPNS-like_FE2OG_OXY"/>
</dbReference>
<dbReference type="InterPro" id="IPR027443">
    <property type="entry name" value="IPNS-like_sf"/>
</dbReference>
<dbReference type="InterPro" id="IPR005123">
    <property type="entry name" value="Oxoglu/Fe-dep_dioxygenase_dom"/>
</dbReference>
<dbReference type="InterPro" id="IPR050295">
    <property type="entry name" value="Plant_2OG-oxidoreductases"/>
</dbReference>
<dbReference type="PANTHER" id="PTHR47991">
    <property type="entry name" value="OXOGLUTARATE/IRON-DEPENDENT DIOXYGENASE"/>
    <property type="match status" value="1"/>
</dbReference>
<dbReference type="Pfam" id="PF03171">
    <property type="entry name" value="2OG-FeII_Oxy"/>
    <property type="match status" value="1"/>
</dbReference>
<dbReference type="Pfam" id="PF14226">
    <property type="entry name" value="DIOX_N"/>
    <property type="match status" value="1"/>
</dbReference>
<dbReference type="SUPFAM" id="SSF51197">
    <property type="entry name" value="Clavaminate synthase-like"/>
    <property type="match status" value="1"/>
</dbReference>
<dbReference type="PROSITE" id="PS51471">
    <property type="entry name" value="FE2OG_OXY"/>
    <property type="match status" value="1"/>
</dbReference>
<accession>P24157</accession>
<name>ACCO4_SOLLC</name>
<keyword id="KW-0266">Ethylene biosynthesis</keyword>
<keyword id="KW-0292">Fruit ripening</keyword>
<keyword id="KW-0408">Iron</keyword>
<keyword id="KW-0479">Metal-binding</keyword>
<keyword id="KW-0560">Oxidoreductase</keyword>
<keyword id="KW-1185">Reference proteome</keyword>
<keyword id="KW-0847">Vitamin C</keyword>
<reference key="1">
    <citation type="journal article" date="1991" name="EMBO J.">
        <title>Analysis and cloning of the ethylene-forming enzyme from tomato by functional expression of its mRNA in Xenopus laevis oocytes.</title>
        <authorList>
            <person name="Spanu P."/>
            <person name="Reinhardt D."/>
            <person name="Boller T."/>
        </authorList>
    </citation>
    <scope>NUCLEOTIDE SEQUENCE</scope>
</reference>
<reference key="2">
    <citation type="journal article" date="1996" name="Plant J.">
        <title>Differential expression of the 1-aminocyclopropane-1-carboxylate oxidase gene family of tomato.</title>
        <authorList>
            <person name="Barry C.S."/>
            <person name="Blume B."/>
            <person name="Bouzayen M."/>
            <person name="Cooper W."/>
            <person name="Hamilton A.J."/>
            <person name="Grierson D."/>
        </authorList>
    </citation>
    <scope>NUCLEOTIDE SEQUENCE [GENOMIC DNA]</scope>
    <source>
        <strain>cv. Ailsa Craig</strain>
    </source>
</reference>
<feature type="chain" id="PRO_0000067263" description="1-aminocyclopropane-1-carboxylate oxidase 4">
    <location>
        <begin position="1"/>
        <end position="316"/>
    </location>
</feature>
<feature type="domain" description="Fe2OG dioxygenase" evidence="1">
    <location>
        <begin position="153"/>
        <end position="253"/>
    </location>
</feature>
<feature type="binding site" evidence="1">
    <location>
        <position position="177"/>
    </location>
    <ligand>
        <name>Fe cation</name>
        <dbReference type="ChEBI" id="CHEBI:24875"/>
    </ligand>
</feature>
<feature type="binding site" evidence="1">
    <location>
        <position position="179"/>
    </location>
    <ligand>
        <name>Fe cation</name>
        <dbReference type="ChEBI" id="CHEBI:24875"/>
    </ligand>
</feature>
<feature type="binding site" evidence="1">
    <location>
        <position position="234"/>
    </location>
    <ligand>
        <name>Fe cation</name>
        <dbReference type="ChEBI" id="CHEBI:24875"/>
    </ligand>
</feature>
<organism>
    <name type="scientific">Solanum lycopersicum</name>
    <name type="common">Tomato</name>
    <name type="synonym">Lycopersicon esculentum</name>
    <dbReference type="NCBI Taxonomy" id="4081"/>
    <lineage>
        <taxon>Eukaryota</taxon>
        <taxon>Viridiplantae</taxon>
        <taxon>Streptophyta</taxon>
        <taxon>Embryophyta</taxon>
        <taxon>Tracheophyta</taxon>
        <taxon>Spermatophyta</taxon>
        <taxon>Magnoliopsida</taxon>
        <taxon>eudicotyledons</taxon>
        <taxon>Gunneridae</taxon>
        <taxon>Pentapetalae</taxon>
        <taxon>asterids</taxon>
        <taxon>lamiids</taxon>
        <taxon>Solanales</taxon>
        <taxon>Solanaceae</taxon>
        <taxon>Solanoideae</taxon>
        <taxon>Solaneae</taxon>
        <taxon>Solanum</taxon>
        <taxon>Solanum subgen. Lycopersicon</taxon>
    </lineage>
</organism>
<evidence type="ECO:0000255" key="1">
    <source>
        <dbReference type="PROSITE-ProRule" id="PRU00805"/>
    </source>
</evidence>
<evidence type="ECO:0000305" key="2"/>
<protein>
    <recommendedName>
        <fullName>1-aminocyclopropane-1-carboxylate oxidase 4</fullName>
        <shortName>ACC oxidase 4</shortName>
        <ecNumber>1.14.17.4</ecNumber>
    </recommendedName>
    <alternativeName>
        <fullName>Ethylene-forming enzyme</fullName>
        <shortName>EFE</shortName>
    </alternativeName>
    <alternativeName>
        <fullName>Protein pHTOM5</fullName>
    </alternativeName>
</protein>
<proteinExistence type="evidence at transcript level"/>
<gene>
    <name type="primary">ACO4</name>
    <name type="synonym">ACO3</name>
</gene>